<keyword id="KW-0030">Aminoacyl-tRNA synthetase</keyword>
<keyword id="KW-0067">ATP-binding</keyword>
<keyword id="KW-0963">Cytoplasm</keyword>
<keyword id="KW-0436">Ligase</keyword>
<keyword id="KW-0547">Nucleotide-binding</keyword>
<keyword id="KW-0648">Protein biosynthesis</keyword>
<proteinExistence type="inferred from homology"/>
<reference key="1">
    <citation type="submission" date="2008-02" db="EMBL/GenBank/DDBJ databases">
        <title>Genome sequence of Ureaplasma parvum serovar 3.</title>
        <authorList>
            <person name="Methe B.A."/>
            <person name="Glass J."/>
            <person name="Waites K."/>
            <person name="Shrivastava S."/>
        </authorList>
    </citation>
    <scope>NUCLEOTIDE SEQUENCE [LARGE SCALE GENOMIC DNA]</scope>
    <source>
        <strain>ATCC 27815 / 27 / NCTC 11736</strain>
    </source>
</reference>
<protein>
    <recommendedName>
        <fullName evidence="1">Glycine--tRNA ligase</fullName>
        <ecNumber evidence="1">6.1.1.14</ecNumber>
    </recommendedName>
    <alternativeName>
        <fullName evidence="1">Glycyl-tRNA synthetase</fullName>
        <shortName evidence="1">GlyRS</shortName>
    </alternativeName>
</protein>
<evidence type="ECO:0000255" key="1">
    <source>
        <dbReference type="HAMAP-Rule" id="MF_00253"/>
    </source>
</evidence>
<organism>
    <name type="scientific">Ureaplasma parvum serovar 3 (strain ATCC 27815 / 27 / NCTC 11736)</name>
    <dbReference type="NCBI Taxonomy" id="505682"/>
    <lineage>
        <taxon>Bacteria</taxon>
        <taxon>Bacillati</taxon>
        <taxon>Mycoplasmatota</taxon>
        <taxon>Mycoplasmoidales</taxon>
        <taxon>Mycoplasmoidaceae</taxon>
        <taxon>Ureaplasma</taxon>
    </lineage>
</organism>
<sequence>MRYKFKTQEDLVNHLKSVGFVFANSEIYNGLANAWDYGPLGVLLKNNLKNLWWKEFVTKQKNIVGLDSAIILNPLVWKASGHLDNFSDPLIDCKSCKTRYRADKLIESFNKDIHIAENSTNEEFMKVLNDHKIFCPTCKQFNWTDIRHFNLMFKTHQGVIEDPKNIVYLRPETAQGIFVNFKNVQRSMRLHLPFGIAQIGKSFRNEITPGNFIFRTREFEQMEIEFFLKEEIAYDVFDKYLNQIQNWLVTCCGLDLNNLRKHEHPKEELSHYSKKTIDFEYNFLHGFSELYGIAYRTNYDLSVHMNLSKKDLTYFDEETKQKYIPHVIEPSVGVERLLYAILTEATFIEKLANDEDRILMNLKYDLAPYKIAVMPLVNKLKEKAEAVYNKILDLNISVTFDNSGSIGKRYRRQDAIGTIYCITIDYDSFGDEHDPTFTIRERNTMAQKRIKLSELSLYLSQKAHEDFQKQCQK</sequence>
<feature type="chain" id="PRO_1000078519" description="Glycine--tRNA ligase">
    <location>
        <begin position="1"/>
        <end position="473"/>
    </location>
</feature>
<feature type="binding site" evidence="1">
    <location>
        <position position="101"/>
    </location>
    <ligand>
        <name>substrate</name>
    </ligand>
</feature>
<feature type="binding site" evidence="1">
    <location>
        <position position="172"/>
    </location>
    <ligand>
        <name>substrate</name>
    </ligand>
</feature>
<feature type="binding site" evidence="1">
    <location>
        <begin position="204"/>
        <end position="206"/>
    </location>
    <ligand>
        <name>ATP</name>
        <dbReference type="ChEBI" id="CHEBI:30616"/>
    </ligand>
</feature>
<feature type="binding site" evidence="1">
    <location>
        <begin position="214"/>
        <end position="219"/>
    </location>
    <ligand>
        <name>ATP</name>
        <dbReference type="ChEBI" id="CHEBI:30616"/>
    </ligand>
</feature>
<feature type="binding site" evidence="1">
    <location>
        <begin position="219"/>
        <end position="223"/>
    </location>
    <ligand>
        <name>substrate</name>
    </ligand>
</feature>
<feature type="binding site" evidence="1">
    <location>
        <begin position="289"/>
        <end position="290"/>
    </location>
    <ligand>
        <name>ATP</name>
        <dbReference type="ChEBI" id="CHEBI:30616"/>
    </ligand>
</feature>
<feature type="binding site" evidence="1">
    <location>
        <begin position="329"/>
        <end position="333"/>
    </location>
    <ligand>
        <name>substrate</name>
    </ligand>
</feature>
<feature type="binding site" evidence="1">
    <location>
        <begin position="333"/>
        <end position="336"/>
    </location>
    <ligand>
        <name>ATP</name>
        <dbReference type="ChEBI" id="CHEBI:30616"/>
    </ligand>
</feature>
<comment type="function">
    <text evidence="1">Catalyzes the attachment of glycine to tRNA(Gly).</text>
</comment>
<comment type="catalytic activity">
    <reaction evidence="1">
        <text>tRNA(Gly) + glycine + ATP = glycyl-tRNA(Gly) + AMP + diphosphate</text>
        <dbReference type="Rhea" id="RHEA:16013"/>
        <dbReference type="Rhea" id="RHEA-COMP:9664"/>
        <dbReference type="Rhea" id="RHEA-COMP:9683"/>
        <dbReference type="ChEBI" id="CHEBI:30616"/>
        <dbReference type="ChEBI" id="CHEBI:33019"/>
        <dbReference type="ChEBI" id="CHEBI:57305"/>
        <dbReference type="ChEBI" id="CHEBI:78442"/>
        <dbReference type="ChEBI" id="CHEBI:78522"/>
        <dbReference type="ChEBI" id="CHEBI:456215"/>
        <dbReference type="EC" id="6.1.1.14"/>
    </reaction>
</comment>
<comment type="subunit">
    <text evidence="1">Homodimer.</text>
</comment>
<comment type="subcellular location">
    <subcellularLocation>
        <location evidence="1">Cytoplasm</location>
    </subcellularLocation>
</comment>
<comment type="similarity">
    <text evidence="1">Belongs to the class-II aminoacyl-tRNA synthetase family.</text>
</comment>
<accession>B1AJD3</accession>
<gene>
    <name evidence="1" type="primary">glyQS</name>
    <name type="ordered locus">UPA3_0511</name>
</gene>
<dbReference type="EC" id="6.1.1.14" evidence="1"/>
<dbReference type="EMBL" id="CP000942">
    <property type="protein sequence ID" value="ACA33073.1"/>
    <property type="molecule type" value="Genomic_DNA"/>
</dbReference>
<dbReference type="RefSeq" id="WP_010891800.1">
    <property type="nucleotide sequence ID" value="NC_010503.1"/>
</dbReference>
<dbReference type="SMR" id="B1AJD3"/>
<dbReference type="GeneID" id="29672356"/>
<dbReference type="KEGG" id="upa:UPA3_0511"/>
<dbReference type="HOGENOM" id="CLU_015515_2_0_14"/>
<dbReference type="Proteomes" id="UP000002162">
    <property type="component" value="Chromosome"/>
</dbReference>
<dbReference type="GO" id="GO:0005737">
    <property type="term" value="C:cytoplasm"/>
    <property type="evidence" value="ECO:0007669"/>
    <property type="project" value="UniProtKB-SubCell"/>
</dbReference>
<dbReference type="GO" id="GO:0005524">
    <property type="term" value="F:ATP binding"/>
    <property type="evidence" value="ECO:0007669"/>
    <property type="project" value="UniProtKB-UniRule"/>
</dbReference>
<dbReference type="GO" id="GO:0004820">
    <property type="term" value="F:glycine-tRNA ligase activity"/>
    <property type="evidence" value="ECO:0000250"/>
    <property type="project" value="UniProtKB"/>
</dbReference>
<dbReference type="GO" id="GO:0046983">
    <property type="term" value="F:protein dimerization activity"/>
    <property type="evidence" value="ECO:0000250"/>
    <property type="project" value="UniProtKB"/>
</dbReference>
<dbReference type="GO" id="GO:0006426">
    <property type="term" value="P:glycyl-tRNA aminoacylation"/>
    <property type="evidence" value="ECO:0007669"/>
    <property type="project" value="UniProtKB-UniRule"/>
</dbReference>
<dbReference type="CDD" id="cd00774">
    <property type="entry name" value="GlyRS-like_core"/>
    <property type="match status" value="1"/>
</dbReference>
<dbReference type="CDD" id="cd00858">
    <property type="entry name" value="GlyRS_anticodon"/>
    <property type="match status" value="1"/>
</dbReference>
<dbReference type="FunFam" id="3.40.50.800:FF:000029">
    <property type="entry name" value="Glycine--tRNA ligase"/>
    <property type="match status" value="1"/>
</dbReference>
<dbReference type="Gene3D" id="3.40.50.800">
    <property type="entry name" value="Anticodon-binding domain"/>
    <property type="match status" value="1"/>
</dbReference>
<dbReference type="Gene3D" id="3.30.930.10">
    <property type="entry name" value="Bira Bifunctional Protein, Domain 2"/>
    <property type="match status" value="1"/>
</dbReference>
<dbReference type="HAMAP" id="MF_00253_B">
    <property type="entry name" value="Gly_tRNA_synth_B"/>
    <property type="match status" value="1"/>
</dbReference>
<dbReference type="InterPro" id="IPR002314">
    <property type="entry name" value="aa-tRNA-synt_IIb"/>
</dbReference>
<dbReference type="InterPro" id="IPR006195">
    <property type="entry name" value="aa-tRNA-synth_II"/>
</dbReference>
<dbReference type="InterPro" id="IPR045864">
    <property type="entry name" value="aa-tRNA-synth_II/BPL/LPL"/>
</dbReference>
<dbReference type="InterPro" id="IPR004154">
    <property type="entry name" value="Anticodon-bd"/>
</dbReference>
<dbReference type="InterPro" id="IPR036621">
    <property type="entry name" value="Anticodon-bd_dom_sf"/>
</dbReference>
<dbReference type="InterPro" id="IPR027031">
    <property type="entry name" value="Gly-tRNA_synthase/POLG2"/>
</dbReference>
<dbReference type="InterPro" id="IPR022961">
    <property type="entry name" value="Gly_tRNA_ligase_bac"/>
</dbReference>
<dbReference type="InterPro" id="IPR033731">
    <property type="entry name" value="GlyRS-like_core"/>
</dbReference>
<dbReference type="InterPro" id="IPR002315">
    <property type="entry name" value="tRNA-synt_gly"/>
</dbReference>
<dbReference type="NCBIfam" id="TIGR00389">
    <property type="entry name" value="glyS_dimeric"/>
    <property type="match status" value="1"/>
</dbReference>
<dbReference type="NCBIfam" id="NF003211">
    <property type="entry name" value="PRK04173.1"/>
    <property type="match status" value="1"/>
</dbReference>
<dbReference type="PANTHER" id="PTHR10745:SF8">
    <property type="entry name" value="DNA POLYMERASE SUBUNIT GAMMA-2, MITOCHONDRIAL"/>
    <property type="match status" value="1"/>
</dbReference>
<dbReference type="PANTHER" id="PTHR10745">
    <property type="entry name" value="GLYCYL-TRNA SYNTHETASE/DNA POLYMERASE SUBUNIT GAMMA-2"/>
    <property type="match status" value="1"/>
</dbReference>
<dbReference type="Pfam" id="PF03129">
    <property type="entry name" value="HGTP_anticodon"/>
    <property type="match status" value="1"/>
</dbReference>
<dbReference type="Pfam" id="PF00587">
    <property type="entry name" value="tRNA-synt_2b"/>
    <property type="match status" value="1"/>
</dbReference>
<dbReference type="PRINTS" id="PR01043">
    <property type="entry name" value="TRNASYNTHGLY"/>
</dbReference>
<dbReference type="SUPFAM" id="SSF52954">
    <property type="entry name" value="Class II aaRS ABD-related"/>
    <property type="match status" value="1"/>
</dbReference>
<dbReference type="SUPFAM" id="SSF55681">
    <property type="entry name" value="Class II aaRS and biotin synthetases"/>
    <property type="match status" value="1"/>
</dbReference>
<dbReference type="PROSITE" id="PS50862">
    <property type="entry name" value="AA_TRNA_LIGASE_II"/>
    <property type="match status" value="1"/>
</dbReference>
<name>SYG_UREP2</name>